<dbReference type="PIR" id="A29134">
    <property type="entry name" value="A29134"/>
</dbReference>
<dbReference type="SMR" id="P08924"/>
<dbReference type="DIP" id="DIP-29125N"/>
<dbReference type="IntAct" id="P08924">
    <property type="interactions" value="7"/>
</dbReference>
<dbReference type="GO" id="GO:0005576">
    <property type="term" value="C:extracellular region"/>
    <property type="evidence" value="ECO:0007669"/>
    <property type="project" value="InterPro"/>
</dbReference>
<dbReference type="GO" id="GO:0005833">
    <property type="term" value="C:hemoglobin complex"/>
    <property type="evidence" value="ECO:0007669"/>
    <property type="project" value="InterPro"/>
</dbReference>
<dbReference type="GO" id="GO:0020037">
    <property type="term" value="F:heme binding"/>
    <property type="evidence" value="ECO:0007669"/>
    <property type="project" value="InterPro"/>
</dbReference>
<dbReference type="GO" id="GO:0005506">
    <property type="term" value="F:iron ion binding"/>
    <property type="evidence" value="ECO:0007669"/>
    <property type="project" value="InterPro"/>
</dbReference>
<dbReference type="GO" id="GO:0019825">
    <property type="term" value="F:oxygen binding"/>
    <property type="evidence" value="ECO:0007669"/>
    <property type="project" value="InterPro"/>
</dbReference>
<dbReference type="GO" id="GO:0005344">
    <property type="term" value="F:oxygen carrier activity"/>
    <property type="evidence" value="ECO:0007669"/>
    <property type="project" value="UniProtKB-KW"/>
</dbReference>
<dbReference type="CDD" id="cd01040">
    <property type="entry name" value="Mb-like"/>
    <property type="match status" value="1"/>
</dbReference>
<dbReference type="Gene3D" id="1.10.490.10">
    <property type="entry name" value="Globins"/>
    <property type="match status" value="1"/>
</dbReference>
<dbReference type="InterPro" id="IPR000971">
    <property type="entry name" value="Globin"/>
</dbReference>
<dbReference type="InterPro" id="IPR009050">
    <property type="entry name" value="Globin-like_sf"/>
</dbReference>
<dbReference type="InterPro" id="IPR012292">
    <property type="entry name" value="Globin/Proto"/>
</dbReference>
<dbReference type="InterPro" id="IPR014610">
    <property type="entry name" value="Haemoglobin_extracell"/>
</dbReference>
<dbReference type="InterPro" id="IPR044399">
    <property type="entry name" value="Mb-like_M"/>
</dbReference>
<dbReference type="Pfam" id="PF00042">
    <property type="entry name" value="Globin"/>
    <property type="match status" value="1"/>
</dbReference>
<dbReference type="PIRSF" id="PIRSF036517">
    <property type="entry name" value="Ext_hemo"/>
    <property type="match status" value="1"/>
</dbReference>
<dbReference type="SUPFAM" id="SSF46458">
    <property type="entry name" value="Globin-like"/>
    <property type="match status" value="1"/>
</dbReference>
<dbReference type="PROSITE" id="PS01033">
    <property type="entry name" value="GLOBIN"/>
    <property type="match status" value="1"/>
</dbReference>
<feature type="chain" id="PRO_0000052506" description="Extracellular globin-1">
    <location>
        <begin position="1"/>
        <end position="142"/>
    </location>
</feature>
<feature type="domain" description="Globin" evidence="2">
    <location>
        <begin position="1"/>
        <end position="142"/>
    </location>
</feature>
<feature type="binding site" description="proximal binding residue" evidence="2">
    <location>
        <position position="94"/>
    </location>
    <ligand>
        <name>heme b</name>
        <dbReference type="ChEBI" id="CHEBI:60344"/>
    </ligand>
    <ligandPart>
        <name>Fe</name>
        <dbReference type="ChEBI" id="CHEBI:18248"/>
    </ligandPart>
</feature>
<feature type="disulfide bond" evidence="1">
    <location>
        <begin position="2"/>
        <end position="131"/>
    </location>
</feature>
<organism>
    <name type="scientific">Lumbricus terrestris</name>
    <name type="common">Common earthworm</name>
    <dbReference type="NCBI Taxonomy" id="6398"/>
    <lineage>
        <taxon>Eukaryota</taxon>
        <taxon>Metazoa</taxon>
        <taxon>Spiralia</taxon>
        <taxon>Lophotrochozoa</taxon>
        <taxon>Annelida</taxon>
        <taxon>Clitellata</taxon>
        <taxon>Oligochaeta</taxon>
        <taxon>Crassiclitellata</taxon>
        <taxon>Lumbricina</taxon>
        <taxon>Lumbricidae</taxon>
        <taxon>Lumbricinae</taxon>
        <taxon>Lumbricus</taxon>
    </lineage>
</organism>
<accession>P08924</accession>
<keyword id="KW-0903">Direct protein sequencing</keyword>
<keyword id="KW-1015">Disulfide bond</keyword>
<keyword id="KW-0349">Heme</keyword>
<keyword id="KW-0408">Iron</keyword>
<keyword id="KW-0479">Metal-binding</keyword>
<keyword id="KW-0561">Oxygen transport</keyword>
<keyword id="KW-0813">Transport</keyword>
<proteinExistence type="evidence at protein level"/>
<protein>
    <recommendedName>
        <fullName>Extracellular globin-1</fullName>
    </recommendedName>
    <alternativeName>
        <fullName>Erythrocruorin</fullName>
    </alternativeName>
    <alternativeName>
        <fullName>Globin D</fullName>
    </alternativeName>
    <alternativeName>
        <fullName>Globin I</fullName>
    </alternativeName>
</protein>
<sequence>ECLVTEGLKVKLQWASAFGHAHQRVAFGLELWKGILREHPEIKAPFSRVRGDNIYSPQFGAHSQRVLSGLDITISMLDTPDMLAAQLAHLKVQHVERNLKPEFFDIFLKHLLHVLGDRLGTHFDFGAWHDCVDQIIDGIKDI</sequence>
<name>GLB1_LUMTE</name>
<reference key="1">
    <citation type="journal article" date="1987" name="J. Biol. Chem.">
        <title>Amino acid sequence of the monomer subunit of the extracellular hemoglobin of Lumbricus terrestris.</title>
        <authorList>
            <person name="Shishikura F."/>
            <person name="Snow J.W."/>
            <person name="Gotoh T."/>
            <person name="Vinogradov S.N."/>
            <person name="Walz D.A."/>
        </authorList>
    </citation>
    <scope>PROTEIN SEQUENCE</scope>
</reference>
<comment type="subunit">
    <text>The extracellular hemoglobin of the earthworm consists of 12 subunits that have a hexagonal bilayer structure with a molecular weight near 3.8 million. Each one-twelfth subunit is composed primarily of disulfide linked trimers (chains A, B, and C) and monomers (chain D).</text>
</comment>
<comment type="similarity">
    <text evidence="2">Belongs to the globin family.</text>
</comment>
<evidence type="ECO:0000250" key="1"/>
<evidence type="ECO:0000255" key="2">
    <source>
        <dbReference type="PROSITE-ProRule" id="PRU00238"/>
    </source>
</evidence>